<name>SR140_MOUSE</name>
<protein>
    <recommendedName>
        <fullName>U2 snRNP-associated SURP motif-containing protein</fullName>
    </recommendedName>
    <alternativeName>
        <fullName>140 kDa Ser/Arg-rich domain protein</fullName>
    </alternativeName>
    <alternativeName>
        <fullName>U2-associated protein SR140</fullName>
    </alternativeName>
</protein>
<feature type="initiator methionine" description="Removed" evidence="2">
    <location>
        <position position="1"/>
    </location>
</feature>
<feature type="chain" id="PRO_0000280071" description="U2 snRNP-associated SURP motif-containing protein">
    <location>
        <begin position="2"/>
        <end position="1029"/>
    </location>
</feature>
<feature type="domain" description="RRM" evidence="4">
    <location>
        <begin position="274"/>
        <end position="355"/>
    </location>
</feature>
<feature type="repeat" description="SURP motif">
    <location>
        <begin position="430"/>
        <end position="473"/>
    </location>
</feature>
<feature type="domain" description="CID" evidence="5">
    <location>
        <begin position="534"/>
        <end position="679"/>
    </location>
</feature>
<feature type="region of interest" description="Disordered" evidence="6">
    <location>
        <begin position="1"/>
        <end position="110"/>
    </location>
</feature>
<feature type="region of interest" description="Disordered" evidence="6">
    <location>
        <begin position="141"/>
        <end position="273"/>
    </location>
</feature>
<feature type="region of interest" description="Disordered" evidence="6">
    <location>
        <begin position="704"/>
        <end position="729"/>
    </location>
</feature>
<feature type="region of interest" description="Disordered" evidence="6">
    <location>
        <begin position="778"/>
        <end position="841"/>
    </location>
</feature>
<feature type="region of interest" description="Disordered" evidence="6">
    <location>
        <begin position="855"/>
        <end position="1029"/>
    </location>
</feature>
<feature type="coiled-coil region" evidence="3">
    <location>
        <begin position="92"/>
        <end position="121"/>
    </location>
</feature>
<feature type="coiled-coil region" evidence="3">
    <location>
        <begin position="192"/>
        <end position="232"/>
    </location>
</feature>
<feature type="coiled-coil region" evidence="3">
    <location>
        <begin position="837"/>
        <end position="915"/>
    </location>
</feature>
<feature type="compositionally biased region" description="Polar residues" evidence="6">
    <location>
        <begin position="7"/>
        <end position="16"/>
    </location>
</feature>
<feature type="compositionally biased region" description="Basic residues" evidence="6">
    <location>
        <begin position="45"/>
        <end position="54"/>
    </location>
</feature>
<feature type="compositionally biased region" description="Basic and acidic residues" evidence="6">
    <location>
        <begin position="55"/>
        <end position="64"/>
    </location>
</feature>
<feature type="compositionally biased region" description="Basic and acidic residues" evidence="6">
    <location>
        <begin position="97"/>
        <end position="110"/>
    </location>
</feature>
<feature type="compositionally biased region" description="Basic and acidic residues" evidence="6">
    <location>
        <begin position="144"/>
        <end position="155"/>
    </location>
</feature>
<feature type="compositionally biased region" description="Polar residues" evidence="6">
    <location>
        <begin position="169"/>
        <end position="178"/>
    </location>
</feature>
<feature type="compositionally biased region" description="Basic and acidic residues" evidence="6">
    <location>
        <begin position="186"/>
        <end position="222"/>
    </location>
</feature>
<feature type="compositionally biased region" description="Basic and acidic residues" evidence="6">
    <location>
        <begin position="239"/>
        <end position="249"/>
    </location>
</feature>
<feature type="compositionally biased region" description="Acidic residues" evidence="6">
    <location>
        <begin position="786"/>
        <end position="806"/>
    </location>
</feature>
<feature type="compositionally biased region" description="Basic and acidic residues" evidence="6">
    <location>
        <begin position="810"/>
        <end position="841"/>
    </location>
</feature>
<feature type="compositionally biased region" description="Basic and acidic residues" evidence="6">
    <location>
        <begin position="874"/>
        <end position="922"/>
    </location>
</feature>
<feature type="compositionally biased region" description="Basic and acidic residues" evidence="6">
    <location>
        <begin position="950"/>
        <end position="980"/>
    </location>
</feature>
<feature type="compositionally biased region" description="Basic residues" evidence="6">
    <location>
        <begin position="991"/>
        <end position="1029"/>
    </location>
</feature>
<feature type="modified residue" description="N-acetylalanine" evidence="2">
    <location>
        <position position="2"/>
    </location>
</feature>
<feature type="modified residue" description="Phosphoserine" evidence="2">
    <location>
        <position position="67"/>
    </location>
</feature>
<feature type="modified residue" description="Phosphoserine" evidence="2">
    <location>
        <position position="202"/>
    </location>
</feature>
<feature type="modified residue" description="Phosphoserine" evidence="2">
    <location>
        <position position="236"/>
    </location>
</feature>
<feature type="modified residue" description="Phosphoserine" evidence="2">
    <location>
        <position position="485"/>
    </location>
</feature>
<feature type="modified residue" description="Phosphothreonine" evidence="2">
    <location>
        <position position="719"/>
    </location>
</feature>
<feature type="modified residue" description="N6-acetyllysine; alternate" evidence="2">
    <location>
        <position position="760"/>
    </location>
</feature>
<feature type="modified residue" description="Phosphoserine" evidence="10">
    <location>
        <position position="788"/>
    </location>
</feature>
<feature type="modified residue" description="Phosphoserine" evidence="10">
    <location>
        <position position="800"/>
    </location>
</feature>
<feature type="modified residue" description="Phosphoserine" evidence="2">
    <location>
        <position position="811"/>
    </location>
</feature>
<feature type="modified residue" description="Phosphothreonine" evidence="2">
    <location>
        <position position="931"/>
    </location>
</feature>
<feature type="modified residue" description="Phosphoserine" evidence="2">
    <location>
        <position position="946"/>
    </location>
</feature>
<feature type="modified residue" description="Phosphoserine" evidence="2">
    <location>
        <position position="948"/>
    </location>
</feature>
<feature type="cross-link" description="Glycyl lysine isopeptide (Lys-Gly) (interchain with G-Cter in SUMO2)" evidence="2">
    <location>
        <position position="80"/>
    </location>
</feature>
<feature type="cross-link" description="Glycyl lysine isopeptide (Lys-Gly) (interchain with G-Cter in SUMO2)" evidence="2">
    <location>
        <position position="145"/>
    </location>
</feature>
<feature type="cross-link" description="Glycyl lysine isopeptide (Lys-Gly) (interchain with G-Cter in SUMO2)" evidence="2">
    <location>
        <position position="168"/>
    </location>
</feature>
<feature type="cross-link" description="Glycyl lysine isopeptide (Lys-Gly) (interchain with G-Cter in SUMO2)" evidence="2">
    <location>
        <position position="208"/>
    </location>
</feature>
<feature type="cross-link" description="Glycyl lysine isopeptide (Lys-Gly) (interchain with G-Cter in SUMO2)" evidence="2">
    <location>
        <position position="748"/>
    </location>
</feature>
<feature type="cross-link" description="Glycyl lysine isopeptide (Lys-Gly) (interchain with G-Cter in SUMO2)" evidence="2">
    <location>
        <position position="749"/>
    </location>
</feature>
<feature type="cross-link" description="Glycyl lysine isopeptide (Lys-Gly) (interchain with G-Cter in SUMO2); alternate" evidence="2">
    <location>
        <position position="760"/>
    </location>
</feature>
<feature type="cross-link" description="Glycyl lysine isopeptide (Lys-Gly) (interchain with G-Cter in SUMO2)" evidence="2">
    <location>
        <position position="829"/>
    </location>
</feature>
<feature type="cross-link" description="Glycyl lysine isopeptide (Lys-Gly) (interchain with G-Cter in SUMO2)" evidence="2">
    <location>
        <position position="832"/>
    </location>
</feature>
<feature type="splice variant" id="VSP_023525" description="In isoform 3." evidence="7">
    <location>
        <begin position="31"/>
        <end position="74"/>
    </location>
</feature>
<feature type="splice variant" id="VSP_023526" description="In isoform 2." evidence="8">
    <location>
        <position position="256"/>
    </location>
</feature>
<feature type="sequence conflict" description="In Ref. 2; AAH68265." evidence="9" ref="2">
    <original>N</original>
    <variation>S</variation>
    <location>
        <position position="327"/>
    </location>
</feature>
<feature type="sequence conflict" description="In Ref. 2; AAH68265." evidence="9" ref="2">
    <original>K</original>
    <variation>R</variation>
    <location>
        <position position="354"/>
    </location>
</feature>
<feature type="sequence conflict" description="In Ref. 2; AAH68265." evidence="9" ref="2">
    <original>L</original>
    <variation>P</variation>
    <location>
        <position position="736"/>
    </location>
</feature>
<evidence type="ECO:0000250" key="1"/>
<evidence type="ECO:0000250" key="2">
    <source>
        <dbReference type="UniProtKB" id="O15042"/>
    </source>
</evidence>
<evidence type="ECO:0000255" key="3"/>
<evidence type="ECO:0000255" key="4">
    <source>
        <dbReference type="PROSITE-ProRule" id="PRU00176"/>
    </source>
</evidence>
<evidence type="ECO:0000255" key="5">
    <source>
        <dbReference type="PROSITE-ProRule" id="PRU00724"/>
    </source>
</evidence>
<evidence type="ECO:0000256" key="6">
    <source>
        <dbReference type="SAM" id="MobiDB-lite"/>
    </source>
</evidence>
<evidence type="ECO:0000303" key="7">
    <source>
    </source>
</evidence>
<evidence type="ECO:0000303" key="8">
    <source>
    </source>
</evidence>
<evidence type="ECO:0000305" key="9"/>
<evidence type="ECO:0007744" key="10">
    <source>
    </source>
</evidence>
<comment type="subunit">
    <text evidence="1">Interacts with ERBB4.</text>
</comment>
<comment type="subcellular location">
    <subcellularLocation>
        <location evidence="1">Nucleus</location>
    </subcellularLocation>
</comment>
<comment type="alternative products">
    <event type="alternative splicing"/>
    <isoform>
        <id>Q6NV83-1</id>
        <name>1</name>
        <sequence type="displayed"/>
    </isoform>
    <isoform>
        <id>Q6NV83-2</id>
        <name>2</name>
        <sequence type="described" ref="VSP_023526"/>
    </isoform>
    <isoform>
        <id>Q6NV83-3</id>
        <name>3</name>
        <sequence type="described" ref="VSP_023525"/>
    </isoform>
</comment>
<comment type="similarity">
    <text evidence="9">Belongs to the splicing factor SR family.</text>
</comment>
<gene>
    <name type="primary">U2surp</name>
    <name type="synonym">Sr140</name>
</gene>
<dbReference type="EMBL" id="AC159895">
    <property type="status" value="NOT_ANNOTATED_CDS"/>
    <property type="molecule type" value="Genomic_DNA"/>
</dbReference>
<dbReference type="EMBL" id="BC068265">
    <property type="protein sequence ID" value="AAH68265.1"/>
    <property type="molecule type" value="mRNA"/>
</dbReference>
<dbReference type="EMBL" id="AK011588">
    <property type="protein sequence ID" value="BAB27718.1"/>
    <property type="molecule type" value="mRNA"/>
</dbReference>
<dbReference type="EMBL" id="AK011796">
    <property type="protein sequence ID" value="BAB27847.1"/>
    <property type="molecule type" value="mRNA"/>
</dbReference>
<dbReference type="CCDS" id="CCDS40727.1">
    <molecule id="Q6NV83-3"/>
</dbReference>
<dbReference type="CCDS" id="CCDS52889.1">
    <molecule id="Q6NV83-1"/>
</dbReference>
<dbReference type="CCDS" id="CCDS90640.1">
    <molecule id="Q6NV83-2"/>
</dbReference>
<dbReference type="RefSeq" id="NP_001108449.1">
    <molecule id="Q6NV83-1"/>
    <property type="nucleotide sequence ID" value="NM_001114977.1"/>
</dbReference>
<dbReference type="RefSeq" id="NP_001344903.1">
    <molecule id="Q6NV83-2"/>
    <property type="nucleotide sequence ID" value="NM_001357974.1"/>
</dbReference>
<dbReference type="RefSeq" id="NP_080752.2">
    <molecule id="Q6NV83-3"/>
    <property type="nucleotide sequence ID" value="NM_026476.2"/>
</dbReference>
<dbReference type="RefSeq" id="XP_006511447.1">
    <property type="nucleotide sequence ID" value="XM_006511384.3"/>
</dbReference>
<dbReference type="SMR" id="Q6NV83"/>
<dbReference type="BioGRID" id="212565">
    <property type="interactions" value="7"/>
</dbReference>
<dbReference type="FunCoup" id="Q6NV83">
    <property type="interactions" value="5383"/>
</dbReference>
<dbReference type="IntAct" id="Q6NV83">
    <property type="interactions" value="1"/>
</dbReference>
<dbReference type="MINT" id="Q6NV83"/>
<dbReference type="STRING" id="10090.ENSMUSP00000078602"/>
<dbReference type="GlyGen" id="Q6NV83">
    <property type="glycosylation" value="3 sites, 2 N-linked glycans (2 sites), 1 O-linked glycan (1 site)"/>
</dbReference>
<dbReference type="iPTMnet" id="Q6NV83"/>
<dbReference type="PhosphoSitePlus" id="Q6NV83"/>
<dbReference type="SwissPalm" id="Q6NV83"/>
<dbReference type="jPOST" id="Q6NV83"/>
<dbReference type="PaxDb" id="10090-ENSMUSP00000078602"/>
<dbReference type="PeptideAtlas" id="Q6NV83"/>
<dbReference type="ProteomicsDB" id="254552">
    <molecule id="Q6NV83-1"/>
</dbReference>
<dbReference type="ProteomicsDB" id="254553">
    <molecule id="Q6NV83-2"/>
</dbReference>
<dbReference type="ProteomicsDB" id="254554">
    <molecule id="Q6NV83-3"/>
</dbReference>
<dbReference type="Pumba" id="Q6NV83"/>
<dbReference type="Antibodypedia" id="48172">
    <property type="antibodies" value="138 antibodies from 23 providers"/>
</dbReference>
<dbReference type="DNASU" id="67958"/>
<dbReference type="Ensembl" id="ENSMUST00000078374.13">
    <molecule id="Q6NV83-3"/>
    <property type="protein sequence ID" value="ENSMUSP00000077482.7"/>
    <property type="gene ID" value="ENSMUSG00000032407.15"/>
</dbReference>
<dbReference type="Ensembl" id="ENSMUST00000079659.12">
    <molecule id="Q6NV83-1"/>
    <property type="protein sequence ID" value="ENSMUSP00000078602.6"/>
    <property type="gene ID" value="ENSMUSG00000032407.15"/>
</dbReference>
<dbReference type="Ensembl" id="ENSMUST00000217176.2">
    <molecule id="Q6NV83-2"/>
    <property type="protein sequence ID" value="ENSMUSP00000151121.2"/>
    <property type="gene ID" value="ENSMUSG00000032407.15"/>
</dbReference>
<dbReference type="GeneID" id="67958"/>
<dbReference type="KEGG" id="mmu:67958"/>
<dbReference type="UCSC" id="uc009rba.2">
    <molecule id="Q6NV83-3"/>
    <property type="organism name" value="mouse"/>
</dbReference>
<dbReference type="UCSC" id="uc009rbb.2">
    <molecule id="Q6NV83-1"/>
    <property type="organism name" value="mouse"/>
</dbReference>
<dbReference type="UCSC" id="uc009rbd.1">
    <molecule id="Q6NV83-2"/>
    <property type="organism name" value="mouse"/>
</dbReference>
<dbReference type="AGR" id="MGI:1915208"/>
<dbReference type="CTD" id="23350"/>
<dbReference type="MGI" id="MGI:1915208">
    <property type="gene designation" value="U2surp"/>
</dbReference>
<dbReference type="VEuPathDB" id="HostDB:ENSMUSG00000032407"/>
<dbReference type="eggNOG" id="KOG0151">
    <property type="taxonomic scope" value="Eukaryota"/>
</dbReference>
<dbReference type="GeneTree" id="ENSGT00390000010687"/>
<dbReference type="HOGENOM" id="CLU_010743_1_0_1"/>
<dbReference type="InParanoid" id="Q6NV83"/>
<dbReference type="OMA" id="FKSRVCN"/>
<dbReference type="OrthoDB" id="377209at2759"/>
<dbReference type="PhylomeDB" id="Q6NV83"/>
<dbReference type="TreeFam" id="TF318729"/>
<dbReference type="Reactome" id="R-MMU-72163">
    <property type="pathway name" value="mRNA Splicing - Major Pathway"/>
</dbReference>
<dbReference type="BioGRID-ORCS" id="67958">
    <property type="hits" value="20 hits in 81 CRISPR screens"/>
</dbReference>
<dbReference type="ChiTaRS" id="U2surp">
    <property type="organism name" value="mouse"/>
</dbReference>
<dbReference type="PRO" id="PR:Q6NV83"/>
<dbReference type="Proteomes" id="UP000000589">
    <property type="component" value="Chromosome 9"/>
</dbReference>
<dbReference type="RNAct" id="Q6NV83">
    <property type="molecule type" value="protein"/>
</dbReference>
<dbReference type="Bgee" id="ENSMUSG00000032407">
    <property type="expression patterns" value="Expressed in pharyngeal arch 2 and 248 other cell types or tissues"/>
</dbReference>
<dbReference type="ExpressionAtlas" id="Q6NV83">
    <property type="expression patterns" value="baseline and differential"/>
</dbReference>
<dbReference type="GO" id="GO:0005654">
    <property type="term" value="C:nucleoplasm"/>
    <property type="evidence" value="ECO:0007669"/>
    <property type="project" value="Ensembl"/>
</dbReference>
<dbReference type="GO" id="GO:0005686">
    <property type="term" value="C:U2 snRNP"/>
    <property type="evidence" value="ECO:0000314"/>
    <property type="project" value="MGI"/>
</dbReference>
<dbReference type="GO" id="GO:0003723">
    <property type="term" value="F:RNA binding"/>
    <property type="evidence" value="ECO:0007669"/>
    <property type="project" value="UniProtKB-KW"/>
</dbReference>
<dbReference type="GO" id="GO:0006396">
    <property type="term" value="P:RNA processing"/>
    <property type="evidence" value="ECO:0007669"/>
    <property type="project" value="InterPro"/>
</dbReference>
<dbReference type="CDD" id="cd21370">
    <property type="entry name" value="cwf21_SR140"/>
    <property type="match status" value="1"/>
</dbReference>
<dbReference type="CDD" id="cd12223">
    <property type="entry name" value="RRM_SR140"/>
    <property type="match status" value="1"/>
</dbReference>
<dbReference type="FunFam" id="1.10.10.790:FF:000006">
    <property type="entry name" value="U2 snRNP-associated SURP motif-containing protein isoform X1"/>
    <property type="match status" value="1"/>
</dbReference>
<dbReference type="FunFam" id="1.25.40.90:FF:000013">
    <property type="entry name" value="U2 snRNP-associated SURP motif-containing protein isoform X1"/>
    <property type="match status" value="1"/>
</dbReference>
<dbReference type="FunFam" id="3.30.70.330:FF:000177">
    <property type="entry name" value="U2 snRNP-associated SURP motif-containing protein-like isoform X2"/>
    <property type="match status" value="1"/>
</dbReference>
<dbReference type="Gene3D" id="1.25.40.90">
    <property type="match status" value="1"/>
</dbReference>
<dbReference type="Gene3D" id="3.30.70.330">
    <property type="match status" value="1"/>
</dbReference>
<dbReference type="Gene3D" id="6.10.140.420">
    <property type="match status" value="1"/>
</dbReference>
<dbReference type="Gene3D" id="1.10.10.790">
    <property type="entry name" value="Surp module"/>
    <property type="match status" value="1"/>
</dbReference>
<dbReference type="InterPro" id="IPR006569">
    <property type="entry name" value="CID_dom"/>
</dbReference>
<dbReference type="InterPro" id="IPR008942">
    <property type="entry name" value="ENTH_VHS"/>
</dbReference>
<dbReference type="InterPro" id="IPR013170">
    <property type="entry name" value="mRNA_splic_Cwf21_dom"/>
</dbReference>
<dbReference type="InterPro" id="IPR012677">
    <property type="entry name" value="Nucleotide-bd_a/b_plait_sf"/>
</dbReference>
<dbReference type="InterPro" id="IPR035979">
    <property type="entry name" value="RBD_domain_sf"/>
</dbReference>
<dbReference type="InterPro" id="IPR000504">
    <property type="entry name" value="RRM_dom"/>
</dbReference>
<dbReference type="InterPro" id="IPR051485">
    <property type="entry name" value="SR-CTD_assoc_factor"/>
</dbReference>
<dbReference type="InterPro" id="IPR047488">
    <property type="entry name" value="SR140_cwf21"/>
</dbReference>
<dbReference type="InterPro" id="IPR035009">
    <property type="entry name" value="SR140_RRM"/>
</dbReference>
<dbReference type="InterPro" id="IPR000061">
    <property type="entry name" value="Surp"/>
</dbReference>
<dbReference type="InterPro" id="IPR035967">
    <property type="entry name" value="SWAP/Surp_sf"/>
</dbReference>
<dbReference type="PANTHER" id="PTHR23140">
    <property type="entry name" value="RNA PROCESSING PROTEIN LD23810P"/>
    <property type="match status" value="1"/>
</dbReference>
<dbReference type="PANTHER" id="PTHR23140:SF0">
    <property type="entry name" value="U2 SNRNP-ASSOCIATED SURP MOTIF-CONTAINING PROTEIN"/>
    <property type="match status" value="1"/>
</dbReference>
<dbReference type="Pfam" id="PF04818">
    <property type="entry name" value="CID"/>
    <property type="match status" value="1"/>
</dbReference>
<dbReference type="Pfam" id="PF08312">
    <property type="entry name" value="cwf21"/>
    <property type="match status" value="1"/>
</dbReference>
<dbReference type="Pfam" id="PF00076">
    <property type="entry name" value="RRM_1"/>
    <property type="match status" value="1"/>
</dbReference>
<dbReference type="Pfam" id="PF01805">
    <property type="entry name" value="Surp"/>
    <property type="match status" value="1"/>
</dbReference>
<dbReference type="SMART" id="SM01115">
    <property type="entry name" value="cwf21"/>
    <property type="match status" value="1"/>
</dbReference>
<dbReference type="SMART" id="SM00582">
    <property type="entry name" value="RPR"/>
    <property type="match status" value="1"/>
</dbReference>
<dbReference type="SMART" id="SM00360">
    <property type="entry name" value="RRM"/>
    <property type="match status" value="1"/>
</dbReference>
<dbReference type="SMART" id="SM00648">
    <property type="entry name" value="SWAP"/>
    <property type="match status" value="1"/>
</dbReference>
<dbReference type="SUPFAM" id="SSF48464">
    <property type="entry name" value="ENTH/VHS domain"/>
    <property type="match status" value="1"/>
</dbReference>
<dbReference type="SUPFAM" id="SSF54928">
    <property type="entry name" value="RNA-binding domain, RBD"/>
    <property type="match status" value="1"/>
</dbReference>
<dbReference type="SUPFAM" id="SSF109905">
    <property type="entry name" value="Surp module (SWAP domain)"/>
    <property type="match status" value="1"/>
</dbReference>
<dbReference type="PROSITE" id="PS51391">
    <property type="entry name" value="CID"/>
    <property type="match status" value="1"/>
</dbReference>
<dbReference type="PROSITE" id="PS50102">
    <property type="entry name" value="RRM"/>
    <property type="match status" value="1"/>
</dbReference>
<dbReference type="PROSITE" id="PS50128">
    <property type="entry name" value="SURP"/>
    <property type="match status" value="1"/>
</dbReference>
<proteinExistence type="evidence at protein level"/>
<keyword id="KW-0007">Acetylation</keyword>
<keyword id="KW-0025">Alternative splicing</keyword>
<keyword id="KW-0175">Coiled coil</keyword>
<keyword id="KW-1017">Isopeptide bond</keyword>
<keyword id="KW-0539">Nucleus</keyword>
<keyword id="KW-0597">Phosphoprotein</keyword>
<keyword id="KW-1185">Reference proteome</keyword>
<keyword id="KW-0694">RNA-binding</keyword>
<keyword id="KW-0832">Ubl conjugation</keyword>
<organism>
    <name type="scientific">Mus musculus</name>
    <name type="common">Mouse</name>
    <dbReference type="NCBI Taxonomy" id="10090"/>
    <lineage>
        <taxon>Eukaryota</taxon>
        <taxon>Metazoa</taxon>
        <taxon>Chordata</taxon>
        <taxon>Craniata</taxon>
        <taxon>Vertebrata</taxon>
        <taxon>Euteleostomi</taxon>
        <taxon>Mammalia</taxon>
        <taxon>Eutheria</taxon>
        <taxon>Euarchontoglires</taxon>
        <taxon>Glires</taxon>
        <taxon>Rodentia</taxon>
        <taxon>Myomorpha</taxon>
        <taxon>Muroidea</taxon>
        <taxon>Muridae</taxon>
        <taxon>Murinae</taxon>
        <taxon>Mus</taxon>
        <taxon>Mus</taxon>
    </lineage>
</organism>
<sequence>MADKTPGGSQKASSKNRSSDVHSSGSSDAHMDASGPSDSDMPSRTRPKSPRKHNYRNESSRESLCDSPHQNLSRPLLENKLKAFSIGKMSTAKRTLSKKEQEELKKKEDEKAAAEIYEEFLAAFEGSDGNKVKTFVRGGVVNAAKDEHETDEKRGKIYKPSSRFADQKNPPNQSSNERPPSLLVIETKKPPLKKGEKEKKKSNLELFKEELKQIQEERDERHKTKGRLSRFEPPQSDSDGQRRSMDVPSRRNRSSGVLDDYAPGSHDVGDPSTTNLYLGNINPQMNEEMLCQEFGRFGPLASVKIMWPRTDEERARERNCGFVAFMNRRDAERALKNLNGKMIMSFEMKLGWGKAVPIPPHPIYIPPSMMEHTLPPPPSGLPFNAQPRERLKNPNAPMLPPPKNKEDFEKTLSQAIVKVVIPTERNLLALIHRMIEFVVREGPMFEAMIMNREINNPMFRFLFENQTPAHVYYRWKLYSILQGDSPTKWRTEDFRMFKNGSFWRPPPLNPYLHGMSEEQETEAFVEEPSKKGALKEEQRDKLEEILRGLTPRKNDIGDAMVFCLNNAEAAEEIVDCITESLSILKTPLPKKIARLYLVSDVLYNSSAKVANASYYRKFFETKLCQIFSDLNATYRTIQGHLQSENFKQRVMTCFRAWEDWAIYPEPFLIKLQNIFLGLVNIIEEKETEDVPDDLDGAPIEEELDGAPLEDVDGIPIDATPIDDLDGVPIKSLDDDLDGVPLDATEDSKKNEPIFKVAPSKWEAVDESELEAQAVTTSKWELFDQHEESEEEENQNQEEESEDEEDTQSSKSEEHHLYSNPVREEATESKFSKYSEMSEEKRAKLREIELKVMKFQDELESGKRPKKPGQSFQEQVEHYRDKLLQREKEKELERERERDKKDKEKLESRSKDKKEKDECTPTRKERKRRHSTSPSPSRSSSGRRVKSPSPKSERSERSERSHKESSRSRSSHKDSPRDASKKAKRSPSGSRTPKRSRRSRSRSPKKSGKKSRSQSRSPHRSHKKSKKNKH</sequence>
<accession>Q6NV83</accession>
<accession>E9QK93</accession>
<accession>Q9CSW7</accession>
<accession>Q9CT00</accession>
<reference key="1">
    <citation type="journal article" date="2009" name="PLoS Biol.">
        <title>Lineage-specific biology revealed by a finished genome assembly of the mouse.</title>
        <authorList>
            <person name="Church D.M."/>
            <person name="Goodstadt L."/>
            <person name="Hillier L.W."/>
            <person name="Zody M.C."/>
            <person name="Goldstein S."/>
            <person name="She X."/>
            <person name="Bult C.J."/>
            <person name="Agarwala R."/>
            <person name="Cherry J.L."/>
            <person name="DiCuccio M."/>
            <person name="Hlavina W."/>
            <person name="Kapustin Y."/>
            <person name="Meric P."/>
            <person name="Maglott D."/>
            <person name="Birtle Z."/>
            <person name="Marques A.C."/>
            <person name="Graves T."/>
            <person name="Zhou S."/>
            <person name="Teague B."/>
            <person name="Potamousis K."/>
            <person name="Churas C."/>
            <person name="Place M."/>
            <person name="Herschleb J."/>
            <person name="Runnheim R."/>
            <person name="Forrest D."/>
            <person name="Amos-Landgraf J."/>
            <person name="Schwartz D.C."/>
            <person name="Cheng Z."/>
            <person name="Lindblad-Toh K."/>
            <person name="Eichler E.E."/>
            <person name="Ponting C.P."/>
        </authorList>
    </citation>
    <scope>NUCLEOTIDE SEQUENCE [LARGE SCALE GENOMIC DNA]</scope>
    <source>
        <strain>C57BL/6J</strain>
    </source>
</reference>
<reference key="2">
    <citation type="journal article" date="2004" name="Genome Res.">
        <title>The status, quality, and expansion of the NIH full-length cDNA project: the Mammalian Gene Collection (MGC).</title>
        <authorList>
            <consortium name="The MGC Project Team"/>
        </authorList>
    </citation>
    <scope>NUCLEOTIDE SEQUENCE [LARGE SCALE MRNA] (ISOFORM 3)</scope>
    <source>
        <tissue>Trophoblast stem cell</tissue>
    </source>
</reference>
<reference key="3">
    <citation type="journal article" date="2005" name="Science">
        <title>The transcriptional landscape of the mammalian genome.</title>
        <authorList>
            <person name="Carninci P."/>
            <person name="Kasukawa T."/>
            <person name="Katayama S."/>
            <person name="Gough J."/>
            <person name="Frith M.C."/>
            <person name="Maeda N."/>
            <person name="Oyama R."/>
            <person name="Ravasi T."/>
            <person name="Lenhard B."/>
            <person name="Wells C."/>
            <person name="Kodzius R."/>
            <person name="Shimokawa K."/>
            <person name="Bajic V.B."/>
            <person name="Brenner S.E."/>
            <person name="Batalov S."/>
            <person name="Forrest A.R."/>
            <person name="Zavolan M."/>
            <person name="Davis M.J."/>
            <person name="Wilming L.G."/>
            <person name="Aidinis V."/>
            <person name="Allen J.E."/>
            <person name="Ambesi-Impiombato A."/>
            <person name="Apweiler R."/>
            <person name="Aturaliya R.N."/>
            <person name="Bailey T.L."/>
            <person name="Bansal M."/>
            <person name="Baxter L."/>
            <person name="Beisel K.W."/>
            <person name="Bersano T."/>
            <person name="Bono H."/>
            <person name="Chalk A.M."/>
            <person name="Chiu K.P."/>
            <person name="Choudhary V."/>
            <person name="Christoffels A."/>
            <person name="Clutterbuck D.R."/>
            <person name="Crowe M.L."/>
            <person name="Dalla E."/>
            <person name="Dalrymple B.P."/>
            <person name="de Bono B."/>
            <person name="Della Gatta G."/>
            <person name="di Bernardo D."/>
            <person name="Down T."/>
            <person name="Engstrom P."/>
            <person name="Fagiolini M."/>
            <person name="Faulkner G."/>
            <person name="Fletcher C.F."/>
            <person name="Fukushima T."/>
            <person name="Furuno M."/>
            <person name="Futaki S."/>
            <person name="Gariboldi M."/>
            <person name="Georgii-Hemming P."/>
            <person name="Gingeras T.R."/>
            <person name="Gojobori T."/>
            <person name="Green R.E."/>
            <person name="Gustincich S."/>
            <person name="Harbers M."/>
            <person name="Hayashi Y."/>
            <person name="Hensch T.K."/>
            <person name="Hirokawa N."/>
            <person name="Hill D."/>
            <person name="Huminiecki L."/>
            <person name="Iacono M."/>
            <person name="Ikeo K."/>
            <person name="Iwama A."/>
            <person name="Ishikawa T."/>
            <person name="Jakt M."/>
            <person name="Kanapin A."/>
            <person name="Katoh M."/>
            <person name="Kawasawa Y."/>
            <person name="Kelso J."/>
            <person name="Kitamura H."/>
            <person name="Kitano H."/>
            <person name="Kollias G."/>
            <person name="Krishnan S.P."/>
            <person name="Kruger A."/>
            <person name="Kummerfeld S.K."/>
            <person name="Kurochkin I.V."/>
            <person name="Lareau L.F."/>
            <person name="Lazarevic D."/>
            <person name="Lipovich L."/>
            <person name="Liu J."/>
            <person name="Liuni S."/>
            <person name="McWilliam S."/>
            <person name="Madan Babu M."/>
            <person name="Madera M."/>
            <person name="Marchionni L."/>
            <person name="Matsuda H."/>
            <person name="Matsuzawa S."/>
            <person name="Miki H."/>
            <person name="Mignone F."/>
            <person name="Miyake S."/>
            <person name="Morris K."/>
            <person name="Mottagui-Tabar S."/>
            <person name="Mulder N."/>
            <person name="Nakano N."/>
            <person name="Nakauchi H."/>
            <person name="Ng P."/>
            <person name="Nilsson R."/>
            <person name="Nishiguchi S."/>
            <person name="Nishikawa S."/>
            <person name="Nori F."/>
            <person name="Ohara O."/>
            <person name="Okazaki Y."/>
            <person name="Orlando V."/>
            <person name="Pang K.C."/>
            <person name="Pavan W.J."/>
            <person name="Pavesi G."/>
            <person name="Pesole G."/>
            <person name="Petrovsky N."/>
            <person name="Piazza S."/>
            <person name="Reed J."/>
            <person name="Reid J.F."/>
            <person name="Ring B.Z."/>
            <person name="Ringwald M."/>
            <person name="Rost B."/>
            <person name="Ruan Y."/>
            <person name="Salzberg S.L."/>
            <person name="Sandelin A."/>
            <person name="Schneider C."/>
            <person name="Schoenbach C."/>
            <person name="Sekiguchi K."/>
            <person name="Semple C.A."/>
            <person name="Seno S."/>
            <person name="Sessa L."/>
            <person name="Sheng Y."/>
            <person name="Shibata Y."/>
            <person name="Shimada H."/>
            <person name="Shimada K."/>
            <person name="Silva D."/>
            <person name="Sinclair B."/>
            <person name="Sperling S."/>
            <person name="Stupka E."/>
            <person name="Sugiura K."/>
            <person name="Sultana R."/>
            <person name="Takenaka Y."/>
            <person name="Taki K."/>
            <person name="Tammoja K."/>
            <person name="Tan S.L."/>
            <person name="Tang S."/>
            <person name="Taylor M.S."/>
            <person name="Tegner J."/>
            <person name="Teichmann S.A."/>
            <person name="Ueda H.R."/>
            <person name="van Nimwegen E."/>
            <person name="Verardo R."/>
            <person name="Wei C.L."/>
            <person name="Yagi K."/>
            <person name="Yamanishi H."/>
            <person name="Zabarovsky E."/>
            <person name="Zhu S."/>
            <person name="Zimmer A."/>
            <person name="Hide W."/>
            <person name="Bult C."/>
            <person name="Grimmond S.M."/>
            <person name="Teasdale R.D."/>
            <person name="Liu E.T."/>
            <person name="Brusic V."/>
            <person name="Quackenbush J."/>
            <person name="Wahlestedt C."/>
            <person name="Mattick J.S."/>
            <person name="Hume D.A."/>
            <person name="Kai C."/>
            <person name="Sasaki D."/>
            <person name="Tomaru Y."/>
            <person name="Fukuda S."/>
            <person name="Kanamori-Katayama M."/>
            <person name="Suzuki M."/>
            <person name="Aoki J."/>
            <person name="Arakawa T."/>
            <person name="Iida J."/>
            <person name="Imamura K."/>
            <person name="Itoh M."/>
            <person name="Kato T."/>
            <person name="Kawaji H."/>
            <person name="Kawagashira N."/>
            <person name="Kawashima T."/>
            <person name="Kojima M."/>
            <person name="Kondo S."/>
            <person name="Konno H."/>
            <person name="Nakano K."/>
            <person name="Ninomiya N."/>
            <person name="Nishio T."/>
            <person name="Okada M."/>
            <person name="Plessy C."/>
            <person name="Shibata K."/>
            <person name="Shiraki T."/>
            <person name="Suzuki S."/>
            <person name="Tagami M."/>
            <person name="Waki K."/>
            <person name="Watahiki A."/>
            <person name="Okamura-Oho Y."/>
            <person name="Suzuki H."/>
            <person name="Kawai J."/>
            <person name="Hayashizaki Y."/>
        </authorList>
    </citation>
    <scope>NUCLEOTIDE SEQUENCE [LARGE SCALE MRNA] OF 1-197 (ISOFORM 1)</scope>
    <scope>NUCLEOTIDE SEQUENCE [LARGE SCALE MRNA] OF 1-338 (ISOFORM 2)</scope>
    <source>
        <strain>C57BL/6J</strain>
        <tissue>Embryo</tissue>
    </source>
</reference>
<reference key="4">
    <citation type="journal article" date="2010" name="Cell">
        <title>A tissue-specific atlas of mouse protein phosphorylation and expression.</title>
        <authorList>
            <person name="Huttlin E.L."/>
            <person name="Jedrychowski M.P."/>
            <person name="Elias J.E."/>
            <person name="Goswami T."/>
            <person name="Rad R."/>
            <person name="Beausoleil S.A."/>
            <person name="Villen J."/>
            <person name="Haas W."/>
            <person name="Sowa M.E."/>
            <person name="Gygi S.P."/>
        </authorList>
    </citation>
    <scope>PHOSPHORYLATION [LARGE SCALE ANALYSIS] AT SER-788 AND SER-800</scope>
    <scope>IDENTIFICATION BY MASS SPECTROMETRY [LARGE SCALE ANALYSIS]</scope>
    <source>
        <tissue>Lung</tissue>
        <tissue>Spleen</tissue>
        <tissue>Testis</tissue>
    </source>
</reference>